<name>KHSE_CORJK</name>
<dbReference type="EC" id="2.7.1.39" evidence="1"/>
<dbReference type="EMBL" id="CR931997">
    <property type="protein sequence ID" value="CAI37522.1"/>
    <property type="molecule type" value="Genomic_DNA"/>
</dbReference>
<dbReference type="RefSeq" id="WP_005293010.1">
    <property type="nucleotide sequence ID" value="NC_007164.1"/>
</dbReference>
<dbReference type="SMR" id="Q4JUI5"/>
<dbReference type="STRING" id="306537.jk1350"/>
<dbReference type="GeneID" id="92738931"/>
<dbReference type="KEGG" id="cjk:jk1350"/>
<dbReference type="eggNOG" id="COG0083">
    <property type="taxonomic scope" value="Bacteria"/>
</dbReference>
<dbReference type="HOGENOM" id="CLU_041243_0_2_11"/>
<dbReference type="OrthoDB" id="9769912at2"/>
<dbReference type="UniPathway" id="UPA00050">
    <property type="reaction ID" value="UER00064"/>
</dbReference>
<dbReference type="Proteomes" id="UP000000545">
    <property type="component" value="Chromosome"/>
</dbReference>
<dbReference type="GO" id="GO:0005737">
    <property type="term" value="C:cytoplasm"/>
    <property type="evidence" value="ECO:0007669"/>
    <property type="project" value="UniProtKB-SubCell"/>
</dbReference>
<dbReference type="GO" id="GO:0005524">
    <property type="term" value="F:ATP binding"/>
    <property type="evidence" value="ECO:0007669"/>
    <property type="project" value="UniProtKB-UniRule"/>
</dbReference>
<dbReference type="GO" id="GO:0004413">
    <property type="term" value="F:homoserine kinase activity"/>
    <property type="evidence" value="ECO:0007669"/>
    <property type="project" value="UniProtKB-UniRule"/>
</dbReference>
<dbReference type="GO" id="GO:0009088">
    <property type="term" value="P:threonine biosynthetic process"/>
    <property type="evidence" value="ECO:0007669"/>
    <property type="project" value="UniProtKB-UniRule"/>
</dbReference>
<dbReference type="Gene3D" id="3.30.230.10">
    <property type="match status" value="1"/>
</dbReference>
<dbReference type="Gene3D" id="3.30.70.890">
    <property type="entry name" value="GHMP kinase, C-terminal domain"/>
    <property type="match status" value="1"/>
</dbReference>
<dbReference type="HAMAP" id="MF_00384">
    <property type="entry name" value="Homoser_kinase"/>
    <property type="match status" value="1"/>
</dbReference>
<dbReference type="InterPro" id="IPR013750">
    <property type="entry name" value="GHMP_kinase_C_dom"/>
</dbReference>
<dbReference type="InterPro" id="IPR036554">
    <property type="entry name" value="GHMP_kinase_C_sf"/>
</dbReference>
<dbReference type="InterPro" id="IPR006204">
    <property type="entry name" value="GHMP_kinase_N_dom"/>
</dbReference>
<dbReference type="InterPro" id="IPR006203">
    <property type="entry name" value="GHMP_knse_ATP-bd_CS"/>
</dbReference>
<dbReference type="InterPro" id="IPR000870">
    <property type="entry name" value="Homoserine_kinase"/>
</dbReference>
<dbReference type="InterPro" id="IPR020568">
    <property type="entry name" value="Ribosomal_Su5_D2-typ_SF"/>
</dbReference>
<dbReference type="InterPro" id="IPR014721">
    <property type="entry name" value="Ribsml_uS5_D2-typ_fold_subgr"/>
</dbReference>
<dbReference type="NCBIfam" id="TIGR00191">
    <property type="entry name" value="thrB"/>
    <property type="match status" value="1"/>
</dbReference>
<dbReference type="PANTHER" id="PTHR20861:SF1">
    <property type="entry name" value="HOMOSERINE KINASE"/>
    <property type="match status" value="1"/>
</dbReference>
<dbReference type="PANTHER" id="PTHR20861">
    <property type="entry name" value="HOMOSERINE/4-DIPHOSPHOCYTIDYL-2-C-METHYL-D-ERYTHRITOL KINASE"/>
    <property type="match status" value="1"/>
</dbReference>
<dbReference type="Pfam" id="PF08544">
    <property type="entry name" value="GHMP_kinases_C"/>
    <property type="match status" value="1"/>
</dbReference>
<dbReference type="Pfam" id="PF00288">
    <property type="entry name" value="GHMP_kinases_N"/>
    <property type="match status" value="1"/>
</dbReference>
<dbReference type="PIRSF" id="PIRSF000676">
    <property type="entry name" value="Homoser_kin"/>
    <property type="match status" value="1"/>
</dbReference>
<dbReference type="PRINTS" id="PR00958">
    <property type="entry name" value="HOMSERKINASE"/>
</dbReference>
<dbReference type="SUPFAM" id="SSF55060">
    <property type="entry name" value="GHMP Kinase, C-terminal domain"/>
    <property type="match status" value="1"/>
</dbReference>
<dbReference type="SUPFAM" id="SSF54211">
    <property type="entry name" value="Ribosomal protein S5 domain 2-like"/>
    <property type="match status" value="1"/>
</dbReference>
<dbReference type="PROSITE" id="PS00627">
    <property type="entry name" value="GHMP_KINASES_ATP"/>
    <property type="match status" value="1"/>
</dbReference>
<keyword id="KW-0028">Amino-acid biosynthesis</keyword>
<keyword id="KW-0067">ATP-binding</keyword>
<keyword id="KW-0963">Cytoplasm</keyword>
<keyword id="KW-0418">Kinase</keyword>
<keyword id="KW-0547">Nucleotide-binding</keyword>
<keyword id="KW-1185">Reference proteome</keyword>
<keyword id="KW-0791">Threonine biosynthesis</keyword>
<keyword id="KW-0808">Transferase</keyword>
<gene>
    <name evidence="1" type="primary">thrB</name>
    <name type="ordered locus">jk1350</name>
</gene>
<evidence type="ECO:0000255" key="1">
    <source>
        <dbReference type="HAMAP-Rule" id="MF_00384"/>
    </source>
</evidence>
<accession>Q4JUI5</accession>
<feature type="chain" id="PRO_1000049127" description="Homoserine kinase">
    <location>
        <begin position="1"/>
        <end position="308"/>
    </location>
</feature>
<feature type="binding site" evidence="1">
    <location>
        <begin position="95"/>
        <end position="105"/>
    </location>
    <ligand>
        <name>ATP</name>
        <dbReference type="ChEBI" id="CHEBI:30616"/>
    </ligand>
</feature>
<organism>
    <name type="scientific">Corynebacterium jeikeium (strain K411)</name>
    <dbReference type="NCBI Taxonomy" id="306537"/>
    <lineage>
        <taxon>Bacteria</taxon>
        <taxon>Bacillati</taxon>
        <taxon>Actinomycetota</taxon>
        <taxon>Actinomycetes</taxon>
        <taxon>Mycobacteriales</taxon>
        <taxon>Corynebacteriaceae</taxon>
        <taxon>Corynebacterium</taxon>
    </lineage>
</organism>
<comment type="function">
    <text evidence="1">Catalyzes the ATP-dependent phosphorylation of L-homoserine to L-homoserine phosphate.</text>
</comment>
<comment type="catalytic activity">
    <reaction evidence="1">
        <text>L-homoserine + ATP = O-phospho-L-homoserine + ADP + H(+)</text>
        <dbReference type="Rhea" id="RHEA:13985"/>
        <dbReference type="ChEBI" id="CHEBI:15378"/>
        <dbReference type="ChEBI" id="CHEBI:30616"/>
        <dbReference type="ChEBI" id="CHEBI:57476"/>
        <dbReference type="ChEBI" id="CHEBI:57590"/>
        <dbReference type="ChEBI" id="CHEBI:456216"/>
        <dbReference type="EC" id="2.7.1.39"/>
    </reaction>
</comment>
<comment type="pathway">
    <text evidence="1">Amino-acid biosynthesis; L-threonine biosynthesis; L-threonine from L-aspartate: step 4/5.</text>
</comment>
<comment type="subcellular location">
    <subcellularLocation>
        <location evidence="1">Cytoplasm</location>
    </subcellularLocation>
</comment>
<comment type="similarity">
    <text evidence="1">Belongs to the GHMP kinase family. Homoserine kinase subfamily.</text>
</comment>
<reference key="1">
    <citation type="journal article" date="2005" name="J. Bacteriol.">
        <title>Complete genome sequence and analysis of the multiresistant nosocomial pathogen Corynebacterium jeikeium K411, a lipid-requiring bacterium of the human skin flora.</title>
        <authorList>
            <person name="Tauch A."/>
            <person name="Kaiser O."/>
            <person name="Hain T."/>
            <person name="Goesmann A."/>
            <person name="Weisshaar B."/>
            <person name="Albersmeier A."/>
            <person name="Bekel T."/>
            <person name="Bischoff N."/>
            <person name="Brune I."/>
            <person name="Chakraborty T."/>
            <person name="Kalinowski J."/>
            <person name="Meyer F."/>
            <person name="Rupp O."/>
            <person name="Schneiker S."/>
            <person name="Viehoever P."/>
            <person name="Puehler A."/>
        </authorList>
    </citation>
    <scope>NUCLEOTIDE SEQUENCE [LARGE SCALE GENOMIC DNA]</scope>
    <source>
        <strain>K411</strain>
    </source>
</reference>
<sequence length="308" mass="32330">MGVEIPVGRKATVKVPASTANLGPGFDTLGLALGLYDYVTAEVIESGLEVEVTGEGEGEVPLDERHLVVRALRATLKEADVTVPGLRVSCTNSIPQSRGLGSSAAAATAGVAAGNGLAGFTLDDQAQVQIASTFEGHPDNAGASVLGAGVVSWTNTPIDGVSAPAYHARRIDVHPDIKATAFIPDFHASTEAIRRVLPSDISHVDARFNVSRTAVMTVALRDDPDLLWEGTRDRMHQTYRAEVLPVTAEWVNRLRNLGYPAFLSGAGPTILVLSTEPVDNALVEEARGRGMKVLELGIAGPVEVDVTG</sequence>
<protein>
    <recommendedName>
        <fullName evidence="1">Homoserine kinase</fullName>
        <shortName evidence="1">HK</shortName>
        <shortName evidence="1">HSK</shortName>
        <ecNumber evidence="1">2.7.1.39</ecNumber>
    </recommendedName>
</protein>
<proteinExistence type="inferred from homology"/>